<dbReference type="EMBL" id="AAYY01000004">
    <property type="protein sequence ID" value="EDP44256.1"/>
    <property type="molecule type" value="Genomic_DNA"/>
</dbReference>
<dbReference type="RefSeq" id="XP_001731470.1">
    <property type="nucleotide sequence ID" value="XM_001731418.1"/>
</dbReference>
<dbReference type="SMR" id="A8PYF7"/>
<dbReference type="STRING" id="425265.A8PYF7"/>
<dbReference type="GeneID" id="5855777"/>
<dbReference type="KEGG" id="mgl:MGL_1653"/>
<dbReference type="VEuPathDB" id="FungiDB:MGL_1653"/>
<dbReference type="InParanoid" id="A8PYF7"/>
<dbReference type="OMA" id="AKARWIQ"/>
<dbReference type="OrthoDB" id="5576752at2759"/>
<dbReference type="Proteomes" id="UP000008837">
    <property type="component" value="Unassembled WGS sequence"/>
</dbReference>
<dbReference type="GO" id="GO:0005743">
    <property type="term" value="C:mitochondrial inner membrane"/>
    <property type="evidence" value="ECO:0007669"/>
    <property type="project" value="UniProtKB-SubCell"/>
</dbReference>
<dbReference type="InterPro" id="IPR012420">
    <property type="entry name" value="Cbp4"/>
</dbReference>
<dbReference type="Pfam" id="PF07960">
    <property type="entry name" value="CBP4"/>
    <property type="match status" value="1"/>
</dbReference>
<comment type="function">
    <text evidence="1">Essential for the assembly of ubiquinol-cytochrome c reductase. It has a direct effect on the correct occurrence of the Rieske protein, core 4, core 5 and apocytochrome b (By similarity).</text>
</comment>
<comment type="subcellular location">
    <subcellularLocation>
        <location evidence="1">Mitochondrion inner membrane</location>
        <topology evidence="1">Single-pass membrane protein</topology>
    </subcellularLocation>
</comment>
<comment type="similarity">
    <text evidence="4">Belongs to the CBP4 family.</text>
</comment>
<feature type="chain" id="PRO_0000341598" description="Assembly factor CBP4">
    <location>
        <begin position="1"/>
        <end position="73"/>
    </location>
</feature>
<feature type="transmembrane region" description="Helical" evidence="2">
    <location>
        <begin position="11"/>
        <end position="30"/>
    </location>
</feature>
<feature type="region of interest" description="Disordered" evidence="3">
    <location>
        <begin position="47"/>
        <end position="73"/>
    </location>
</feature>
<feature type="compositionally biased region" description="Basic and acidic residues" evidence="3">
    <location>
        <begin position="57"/>
        <end position="73"/>
    </location>
</feature>
<sequence length="73" mass="7949">MAGGPANWARAITGGSVVIGFGYLLLKTATPNEQQLYDSLSPDLKRRVDAQRSSQADSERSAKVKEEQSKRLV</sequence>
<accession>A8PYF7</accession>
<gene>
    <name type="primary">CBP4</name>
    <name type="ORF">MGL_1653</name>
</gene>
<protein>
    <recommendedName>
        <fullName>Assembly factor CBP4</fullName>
    </recommendedName>
    <alternativeName>
        <fullName>Cytochrome b mRNA processing protein 4</fullName>
    </alternativeName>
</protein>
<proteinExistence type="inferred from homology"/>
<reference key="1">
    <citation type="journal article" date="2007" name="Proc. Natl. Acad. Sci. U.S.A.">
        <title>Dandruff-associated Malassezia genomes reveal convergent and divergent virulence traits shared with plant and human fungal pathogens.</title>
        <authorList>
            <person name="Xu J."/>
            <person name="Saunders C.W."/>
            <person name="Hu P."/>
            <person name="Grant R.A."/>
            <person name="Boekhout T."/>
            <person name="Kuramae E.E."/>
            <person name="Kronstad J.W."/>
            <person name="DeAngelis Y.M."/>
            <person name="Reeder N.L."/>
            <person name="Johnstone K.R."/>
            <person name="Leland M."/>
            <person name="Fieno A.M."/>
            <person name="Begley W.M."/>
            <person name="Sun Y."/>
            <person name="Lacey M.P."/>
            <person name="Chaudhary T."/>
            <person name="Keough T."/>
            <person name="Chu L."/>
            <person name="Sears R."/>
            <person name="Yuan B."/>
            <person name="Dawson T.L. Jr."/>
        </authorList>
    </citation>
    <scope>NUCLEOTIDE SEQUENCE [LARGE SCALE GENOMIC DNA]</scope>
    <source>
        <strain>ATCC MYA-4612 / CBS 7966</strain>
    </source>
</reference>
<name>CBP4_MALGO</name>
<evidence type="ECO:0000250" key="1"/>
<evidence type="ECO:0000255" key="2"/>
<evidence type="ECO:0000256" key="3">
    <source>
        <dbReference type="SAM" id="MobiDB-lite"/>
    </source>
</evidence>
<evidence type="ECO:0000305" key="4"/>
<keyword id="KW-0143">Chaperone</keyword>
<keyword id="KW-0175">Coiled coil</keyword>
<keyword id="KW-0472">Membrane</keyword>
<keyword id="KW-0496">Mitochondrion</keyword>
<keyword id="KW-0999">Mitochondrion inner membrane</keyword>
<keyword id="KW-1185">Reference proteome</keyword>
<keyword id="KW-0812">Transmembrane</keyword>
<keyword id="KW-1133">Transmembrane helix</keyword>
<organism>
    <name type="scientific">Malassezia globosa (strain ATCC MYA-4612 / CBS 7966)</name>
    <name type="common">Dandruff-associated fungus</name>
    <dbReference type="NCBI Taxonomy" id="425265"/>
    <lineage>
        <taxon>Eukaryota</taxon>
        <taxon>Fungi</taxon>
        <taxon>Dikarya</taxon>
        <taxon>Basidiomycota</taxon>
        <taxon>Ustilaginomycotina</taxon>
        <taxon>Malasseziomycetes</taxon>
        <taxon>Malasseziales</taxon>
        <taxon>Malasseziaceae</taxon>
        <taxon>Malassezia</taxon>
    </lineage>
</organism>